<name>END4_MYCMM</name>
<evidence type="ECO:0000255" key="1">
    <source>
        <dbReference type="HAMAP-Rule" id="MF_00152"/>
    </source>
</evidence>
<proteinExistence type="inferred from homology"/>
<reference key="1">
    <citation type="journal article" date="2008" name="Genome Res.">
        <title>Insights from the complete genome sequence of Mycobacterium marinum on the evolution of Mycobacterium tuberculosis.</title>
        <authorList>
            <person name="Stinear T.P."/>
            <person name="Seemann T."/>
            <person name="Harrison P.F."/>
            <person name="Jenkin G.A."/>
            <person name="Davies J.K."/>
            <person name="Johnson P.D."/>
            <person name="Abdellah Z."/>
            <person name="Arrowsmith C."/>
            <person name="Chillingworth T."/>
            <person name="Churcher C."/>
            <person name="Clarke K."/>
            <person name="Cronin A."/>
            <person name="Davis P."/>
            <person name="Goodhead I."/>
            <person name="Holroyd N."/>
            <person name="Jagels K."/>
            <person name="Lord A."/>
            <person name="Moule S."/>
            <person name="Mungall K."/>
            <person name="Norbertczak H."/>
            <person name="Quail M.A."/>
            <person name="Rabbinowitsch E."/>
            <person name="Walker D."/>
            <person name="White B."/>
            <person name="Whitehead S."/>
            <person name="Small P.L."/>
            <person name="Brosch R."/>
            <person name="Ramakrishnan L."/>
            <person name="Fischbach M.A."/>
            <person name="Parkhill J."/>
            <person name="Cole S.T."/>
        </authorList>
    </citation>
    <scope>NUCLEOTIDE SEQUENCE [LARGE SCALE GENOMIC DNA]</scope>
    <source>
        <strain>ATCC BAA-535 / M</strain>
    </source>
</reference>
<protein>
    <recommendedName>
        <fullName evidence="1">Probable endonuclease 4</fullName>
        <ecNumber evidence="1">3.1.21.2</ecNumber>
    </recommendedName>
    <alternativeName>
        <fullName evidence="1">Endodeoxyribonuclease IV</fullName>
    </alternativeName>
    <alternativeName>
        <fullName evidence="1">Endonuclease IV</fullName>
    </alternativeName>
</protein>
<organism>
    <name type="scientific">Mycobacterium marinum (strain ATCC BAA-535 / M)</name>
    <dbReference type="NCBI Taxonomy" id="216594"/>
    <lineage>
        <taxon>Bacteria</taxon>
        <taxon>Bacillati</taxon>
        <taxon>Actinomycetota</taxon>
        <taxon>Actinomycetes</taxon>
        <taxon>Mycobacteriales</taxon>
        <taxon>Mycobacteriaceae</taxon>
        <taxon>Mycobacterium</taxon>
        <taxon>Mycobacterium ulcerans group</taxon>
    </lineage>
</organism>
<comment type="function">
    <text evidence="1">Endonuclease IV plays a role in DNA repair. It cleaves phosphodiester bonds at apurinic or apyrimidinic (AP) sites, generating a 3'-hydroxyl group and a 5'-terminal sugar phosphate.</text>
</comment>
<comment type="catalytic activity">
    <reaction evidence="1">
        <text>Endonucleolytic cleavage to 5'-phosphooligonucleotide end-products.</text>
        <dbReference type="EC" id="3.1.21.2"/>
    </reaction>
</comment>
<comment type="cofactor">
    <cofactor evidence="1">
        <name>Zn(2+)</name>
        <dbReference type="ChEBI" id="CHEBI:29105"/>
    </cofactor>
    <text evidence="1">Binds 3 Zn(2+) ions.</text>
</comment>
<comment type="similarity">
    <text evidence="1">Belongs to the AP endonuclease 2 family.</text>
</comment>
<sequence length="252" mass="27009">MLIGSHVSPQDPLAAAQAEGAEVVQIFLGNPQSWKAPKPREDAAQLKAAALPIYVHAPYLINLASANNKVRIPSRKILQQTCDAAADIGAAAVIVHGGHVADDNDLDEGFQRWRKALDQLQTDVPVYLENTAGGEHAMARHFDTIARLWDVIGDTGIGFCLDTCHAWAAGEQLVHGVDRIKAVTGRIDLVHCNDSRDAAGSGRDRHANLGAGQIDPELLVAAVRAADAPIICETAEEGRKDDIAFLREKLNS</sequence>
<gene>
    <name evidence="1" type="primary">nfo</name>
    <name type="ordered locus">MMAR_0999</name>
</gene>
<feature type="chain" id="PRO_1000096892" description="Probable endonuclease 4">
    <location>
        <begin position="1"/>
        <end position="252"/>
    </location>
</feature>
<feature type="binding site" evidence="1">
    <location>
        <position position="56"/>
    </location>
    <ligand>
        <name>Zn(2+)</name>
        <dbReference type="ChEBI" id="CHEBI:29105"/>
        <label>1</label>
    </ligand>
</feature>
<feature type="binding site" evidence="1">
    <location>
        <position position="96"/>
    </location>
    <ligand>
        <name>Zn(2+)</name>
        <dbReference type="ChEBI" id="CHEBI:29105"/>
        <label>1</label>
    </ligand>
</feature>
<feature type="binding site" evidence="1">
    <location>
        <position position="129"/>
    </location>
    <ligand>
        <name>Zn(2+)</name>
        <dbReference type="ChEBI" id="CHEBI:29105"/>
        <label>1</label>
    </ligand>
</feature>
<feature type="binding site" evidence="1">
    <location>
        <position position="129"/>
    </location>
    <ligand>
        <name>Zn(2+)</name>
        <dbReference type="ChEBI" id="CHEBI:29105"/>
        <label>2</label>
    </ligand>
</feature>
<feature type="binding site" evidence="1">
    <location>
        <position position="162"/>
    </location>
    <ligand>
        <name>Zn(2+)</name>
        <dbReference type="ChEBI" id="CHEBI:29105"/>
        <label>2</label>
    </ligand>
</feature>
<feature type="binding site" evidence="1">
    <location>
        <position position="165"/>
    </location>
    <ligand>
        <name>Zn(2+)</name>
        <dbReference type="ChEBI" id="CHEBI:29105"/>
        <label>3</label>
    </ligand>
</feature>
<feature type="binding site" evidence="1">
    <location>
        <position position="191"/>
    </location>
    <ligand>
        <name>Zn(2+)</name>
        <dbReference type="ChEBI" id="CHEBI:29105"/>
        <label>2</label>
    </ligand>
</feature>
<feature type="binding site" evidence="1">
    <location>
        <position position="204"/>
    </location>
    <ligand>
        <name>Zn(2+)</name>
        <dbReference type="ChEBI" id="CHEBI:29105"/>
        <label>3</label>
    </ligand>
</feature>
<feature type="binding site" evidence="1">
    <location>
        <position position="206"/>
    </location>
    <ligand>
        <name>Zn(2+)</name>
        <dbReference type="ChEBI" id="CHEBI:29105"/>
        <label>3</label>
    </ligand>
</feature>
<feature type="binding site" evidence="1">
    <location>
        <position position="233"/>
    </location>
    <ligand>
        <name>Zn(2+)</name>
        <dbReference type="ChEBI" id="CHEBI:29105"/>
        <label>2</label>
    </ligand>
</feature>
<keyword id="KW-0227">DNA damage</keyword>
<keyword id="KW-0234">DNA repair</keyword>
<keyword id="KW-0255">Endonuclease</keyword>
<keyword id="KW-0378">Hydrolase</keyword>
<keyword id="KW-0479">Metal-binding</keyword>
<keyword id="KW-0540">Nuclease</keyword>
<keyword id="KW-1185">Reference proteome</keyword>
<keyword id="KW-0862">Zinc</keyword>
<dbReference type="EC" id="3.1.21.2" evidence="1"/>
<dbReference type="EMBL" id="CP000854">
    <property type="protein sequence ID" value="ACC39456.1"/>
    <property type="molecule type" value="Genomic_DNA"/>
</dbReference>
<dbReference type="RefSeq" id="WP_012392911.1">
    <property type="nucleotide sequence ID" value="NC_010612.1"/>
</dbReference>
<dbReference type="SMR" id="B2HSJ8"/>
<dbReference type="STRING" id="216594.MMAR_0999"/>
<dbReference type="KEGG" id="mmi:MMAR_0999"/>
<dbReference type="eggNOG" id="COG0648">
    <property type="taxonomic scope" value="Bacteria"/>
</dbReference>
<dbReference type="HOGENOM" id="CLU_025885_0_2_11"/>
<dbReference type="OrthoDB" id="9805666at2"/>
<dbReference type="Proteomes" id="UP000001190">
    <property type="component" value="Chromosome"/>
</dbReference>
<dbReference type="GO" id="GO:0008833">
    <property type="term" value="F:deoxyribonuclease IV (phage-T4-induced) activity"/>
    <property type="evidence" value="ECO:0007669"/>
    <property type="project" value="UniProtKB-UniRule"/>
</dbReference>
<dbReference type="GO" id="GO:0003677">
    <property type="term" value="F:DNA binding"/>
    <property type="evidence" value="ECO:0007669"/>
    <property type="project" value="InterPro"/>
</dbReference>
<dbReference type="GO" id="GO:0003906">
    <property type="term" value="F:DNA-(apurinic or apyrimidinic site) endonuclease activity"/>
    <property type="evidence" value="ECO:0007669"/>
    <property type="project" value="TreeGrafter"/>
</dbReference>
<dbReference type="GO" id="GO:0008081">
    <property type="term" value="F:phosphoric diester hydrolase activity"/>
    <property type="evidence" value="ECO:0007669"/>
    <property type="project" value="TreeGrafter"/>
</dbReference>
<dbReference type="GO" id="GO:0008270">
    <property type="term" value="F:zinc ion binding"/>
    <property type="evidence" value="ECO:0007669"/>
    <property type="project" value="UniProtKB-UniRule"/>
</dbReference>
<dbReference type="GO" id="GO:0006284">
    <property type="term" value="P:base-excision repair"/>
    <property type="evidence" value="ECO:0007669"/>
    <property type="project" value="TreeGrafter"/>
</dbReference>
<dbReference type="CDD" id="cd00019">
    <property type="entry name" value="AP2Ec"/>
    <property type="match status" value="1"/>
</dbReference>
<dbReference type="Gene3D" id="3.20.20.150">
    <property type="entry name" value="Divalent-metal-dependent TIM barrel enzymes"/>
    <property type="match status" value="1"/>
</dbReference>
<dbReference type="HAMAP" id="MF_00152">
    <property type="entry name" value="Nfo"/>
    <property type="match status" value="1"/>
</dbReference>
<dbReference type="InterPro" id="IPR001719">
    <property type="entry name" value="AP_endonuc_2"/>
</dbReference>
<dbReference type="InterPro" id="IPR018246">
    <property type="entry name" value="AP_endonuc_F2_Zn_BS"/>
</dbReference>
<dbReference type="InterPro" id="IPR036237">
    <property type="entry name" value="Xyl_isomerase-like_sf"/>
</dbReference>
<dbReference type="InterPro" id="IPR013022">
    <property type="entry name" value="Xyl_isomerase-like_TIM-brl"/>
</dbReference>
<dbReference type="NCBIfam" id="TIGR00587">
    <property type="entry name" value="nfo"/>
    <property type="match status" value="1"/>
</dbReference>
<dbReference type="NCBIfam" id="NF002198">
    <property type="entry name" value="PRK01060.1-3"/>
    <property type="match status" value="1"/>
</dbReference>
<dbReference type="PANTHER" id="PTHR21445:SF0">
    <property type="entry name" value="APURINIC-APYRIMIDINIC ENDONUCLEASE"/>
    <property type="match status" value="1"/>
</dbReference>
<dbReference type="PANTHER" id="PTHR21445">
    <property type="entry name" value="ENDONUCLEASE IV ENDODEOXYRIBONUCLEASE IV"/>
    <property type="match status" value="1"/>
</dbReference>
<dbReference type="Pfam" id="PF01261">
    <property type="entry name" value="AP_endonuc_2"/>
    <property type="match status" value="1"/>
</dbReference>
<dbReference type="SMART" id="SM00518">
    <property type="entry name" value="AP2Ec"/>
    <property type="match status" value="1"/>
</dbReference>
<dbReference type="SUPFAM" id="SSF51658">
    <property type="entry name" value="Xylose isomerase-like"/>
    <property type="match status" value="1"/>
</dbReference>
<dbReference type="PROSITE" id="PS00729">
    <property type="entry name" value="AP_NUCLEASE_F2_1"/>
    <property type="match status" value="1"/>
</dbReference>
<dbReference type="PROSITE" id="PS00730">
    <property type="entry name" value="AP_NUCLEASE_F2_2"/>
    <property type="match status" value="1"/>
</dbReference>
<dbReference type="PROSITE" id="PS00731">
    <property type="entry name" value="AP_NUCLEASE_F2_3"/>
    <property type="match status" value="1"/>
</dbReference>
<dbReference type="PROSITE" id="PS51432">
    <property type="entry name" value="AP_NUCLEASE_F2_4"/>
    <property type="match status" value="1"/>
</dbReference>
<accession>B2HSJ8</accession>